<sequence length="145" mass="16369">METSDELKQRIGELSYEVTQHAATESPFTGEYDDFFEKGIYVDIVSGEVLFSSLDKFNSGCGWPAFSKPIENRMVTNHDDSSYGMRRVEVKSREAGSHLGHVFSDGPKEAGGLRYCINSAALKFIPYDQMEKEGYAQWLTLFDET</sequence>
<name>MSRB_STRP3</name>
<protein>
    <recommendedName>
        <fullName evidence="1">Peptide methionine sulfoxide reductase MsrB</fullName>
        <ecNumber evidence="1">1.8.4.12</ecNumber>
    </recommendedName>
    <alternativeName>
        <fullName evidence="1">Peptide-methionine (R)-S-oxide reductase</fullName>
    </alternativeName>
</protein>
<proteinExistence type="inferred from homology"/>
<accession>P0DC42</accession>
<accession>Q8K7M6</accession>
<dbReference type="EC" id="1.8.4.12" evidence="1"/>
<dbReference type="EMBL" id="AE014074">
    <property type="protein sequence ID" value="AAM79346.1"/>
    <property type="molecule type" value="Genomic_DNA"/>
</dbReference>
<dbReference type="RefSeq" id="WP_011054453.1">
    <property type="nucleotide sequence ID" value="NC_004070.1"/>
</dbReference>
<dbReference type="SMR" id="P0DC42"/>
<dbReference type="KEGG" id="spg:SpyM3_0739"/>
<dbReference type="HOGENOM" id="CLU_031040_8_5_9"/>
<dbReference type="Proteomes" id="UP000000564">
    <property type="component" value="Chromosome"/>
</dbReference>
<dbReference type="GO" id="GO:0005737">
    <property type="term" value="C:cytoplasm"/>
    <property type="evidence" value="ECO:0007669"/>
    <property type="project" value="TreeGrafter"/>
</dbReference>
<dbReference type="GO" id="GO:0033743">
    <property type="term" value="F:peptide-methionine (R)-S-oxide reductase activity"/>
    <property type="evidence" value="ECO:0007669"/>
    <property type="project" value="UniProtKB-UniRule"/>
</dbReference>
<dbReference type="GO" id="GO:0030091">
    <property type="term" value="P:protein repair"/>
    <property type="evidence" value="ECO:0007669"/>
    <property type="project" value="InterPro"/>
</dbReference>
<dbReference type="GO" id="GO:0006979">
    <property type="term" value="P:response to oxidative stress"/>
    <property type="evidence" value="ECO:0007669"/>
    <property type="project" value="InterPro"/>
</dbReference>
<dbReference type="FunFam" id="2.170.150.20:FF:000003">
    <property type="entry name" value="Peptide methionine sulfoxide reductase MsrB"/>
    <property type="match status" value="1"/>
</dbReference>
<dbReference type="Gene3D" id="2.170.150.20">
    <property type="entry name" value="Peptide methionine sulfoxide reductase"/>
    <property type="match status" value="1"/>
</dbReference>
<dbReference type="HAMAP" id="MF_01400">
    <property type="entry name" value="MsrB"/>
    <property type="match status" value="1"/>
</dbReference>
<dbReference type="InterPro" id="IPR028427">
    <property type="entry name" value="Met_Sox_Rdtase_MsrB"/>
</dbReference>
<dbReference type="InterPro" id="IPR002579">
    <property type="entry name" value="Met_Sox_Rdtase_MsrB_dom"/>
</dbReference>
<dbReference type="InterPro" id="IPR011057">
    <property type="entry name" value="Mss4-like_sf"/>
</dbReference>
<dbReference type="NCBIfam" id="TIGR00357">
    <property type="entry name" value="peptide-methionine (R)-S-oxide reductase MsrB"/>
    <property type="match status" value="1"/>
</dbReference>
<dbReference type="PANTHER" id="PTHR10173">
    <property type="entry name" value="METHIONINE SULFOXIDE REDUCTASE"/>
    <property type="match status" value="1"/>
</dbReference>
<dbReference type="PANTHER" id="PTHR10173:SF59">
    <property type="entry name" value="PEPTIDE METHIONINE SULFOXIDE REDUCTASE MSRA_MSRB"/>
    <property type="match status" value="1"/>
</dbReference>
<dbReference type="Pfam" id="PF01641">
    <property type="entry name" value="SelR"/>
    <property type="match status" value="1"/>
</dbReference>
<dbReference type="SUPFAM" id="SSF51316">
    <property type="entry name" value="Mss4-like"/>
    <property type="match status" value="1"/>
</dbReference>
<dbReference type="PROSITE" id="PS51790">
    <property type="entry name" value="MSRB"/>
    <property type="match status" value="1"/>
</dbReference>
<keyword id="KW-0560">Oxidoreductase</keyword>
<gene>
    <name evidence="1" type="primary">msrB</name>
    <name type="synonym">csrA</name>
    <name type="ordered locus">SpyM3_0739</name>
</gene>
<reference key="1">
    <citation type="journal article" date="2002" name="Proc. Natl. Acad. Sci. U.S.A.">
        <title>Genome sequence of a serotype M3 strain of group A Streptococcus: phage-encoded toxins, the high-virulence phenotype, and clone emergence.</title>
        <authorList>
            <person name="Beres S.B."/>
            <person name="Sylva G.L."/>
            <person name="Barbian K.D."/>
            <person name="Lei B."/>
            <person name="Hoff J.S."/>
            <person name="Mammarella N.D."/>
            <person name="Liu M.-Y."/>
            <person name="Smoot J.C."/>
            <person name="Porcella S.F."/>
            <person name="Parkins L.D."/>
            <person name="Campbell D.S."/>
            <person name="Smith T.M."/>
            <person name="McCormick J.K."/>
            <person name="Leung D.Y.M."/>
            <person name="Schlievert P.M."/>
            <person name="Musser J.M."/>
        </authorList>
    </citation>
    <scope>NUCLEOTIDE SEQUENCE [LARGE SCALE GENOMIC DNA]</scope>
    <source>
        <strain>ATCC BAA-595 / MGAS315</strain>
    </source>
</reference>
<evidence type="ECO:0000255" key="1">
    <source>
        <dbReference type="HAMAP-Rule" id="MF_01400"/>
    </source>
</evidence>
<evidence type="ECO:0000255" key="2">
    <source>
        <dbReference type="PROSITE-ProRule" id="PRU01126"/>
    </source>
</evidence>
<organism>
    <name type="scientific">Streptococcus pyogenes serotype M3 (strain ATCC BAA-595 / MGAS315)</name>
    <dbReference type="NCBI Taxonomy" id="198466"/>
    <lineage>
        <taxon>Bacteria</taxon>
        <taxon>Bacillati</taxon>
        <taxon>Bacillota</taxon>
        <taxon>Bacilli</taxon>
        <taxon>Lactobacillales</taxon>
        <taxon>Streptococcaceae</taxon>
        <taxon>Streptococcus</taxon>
    </lineage>
</organism>
<comment type="catalytic activity">
    <reaction evidence="1">
        <text>L-methionyl-[protein] + [thioredoxin]-disulfide + H2O = L-methionyl-(R)-S-oxide-[protein] + [thioredoxin]-dithiol</text>
        <dbReference type="Rhea" id="RHEA:24164"/>
        <dbReference type="Rhea" id="RHEA-COMP:10698"/>
        <dbReference type="Rhea" id="RHEA-COMP:10700"/>
        <dbReference type="Rhea" id="RHEA-COMP:12313"/>
        <dbReference type="Rhea" id="RHEA-COMP:12314"/>
        <dbReference type="ChEBI" id="CHEBI:15377"/>
        <dbReference type="ChEBI" id="CHEBI:16044"/>
        <dbReference type="ChEBI" id="CHEBI:29950"/>
        <dbReference type="ChEBI" id="CHEBI:45764"/>
        <dbReference type="ChEBI" id="CHEBI:50058"/>
        <dbReference type="EC" id="1.8.4.12"/>
    </reaction>
</comment>
<comment type="similarity">
    <text evidence="1">Belongs to the MsrB Met sulfoxide reductase family.</text>
</comment>
<feature type="chain" id="PRO_0000140308" description="Peptide methionine sulfoxide reductase MsrB">
    <location>
        <begin position="1"/>
        <end position="145"/>
    </location>
</feature>
<feature type="domain" description="MsrB" evidence="2">
    <location>
        <begin position="4"/>
        <end position="127"/>
    </location>
</feature>
<feature type="active site" description="Nucleophile" evidence="2">
    <location>
        <position position="116"/>
    </location>
</feature>